<protein>
    <recommendedName>
        <fullName evidence="1">5'/3'-nucleotidase SurE</fullName>
        <ecNumber evidence="1">3.1.3.5</ecNumber>
        <ecNumber evidence="1">3.1.3.6</ecNumber>
    </recommendedName>
    <alternativeName>
        <fullName evidence="1">Exopolyphosphatase</fullName>
        <ecNumber evidence="1">3.6.1.11</ecNumber>
    </alternativeName>
    <alternativeName>
        <fullName evidence="1">Nucleoside monophosphate phosphohydrolase</fullName>
    </alternativeName>
</protein>
<gene>
    <name evidence="1" type="primary">surE</name>
    <name type="ordered locus">YPN_0735</name>
    <name type="ORF">YP516_0783</name>
</gene>
<keyword id="KW-0963">Cytoplasm</keyword>
<keyword id="KW-0378">Hydrolase</keyword>
<keyword id="KW-0479">Metal-binding</keyword>
<keyword id="KW-0547">Nucleotide-binding</keyword>
<sequence>MIRILLSNDDGISAPGIQTLASALRGFAQVQIVAPDRNRSGASNALTLDSALRITTLSNGDIAVQQGTPTDCVYLGVNALMRPRPDIVVSGINAGPNLGDDVIYSGTVAAAMEGRHLGYPALAVSLNGHQHYDTAAAVTCRLLRALQRKPLRTGKILNINVPDLPLAEIKGIRVTRCGSRHPAEQVFCQQDPRGQDLYWIGPPGEKYDAGPDTDFAAVEQGYVSITPLQVDLTAYMAQEVVESWLANTEVDGEW</sequence>
<feature type="chain" id="PRO_1000007804" description="5'/3'-nucleotidase SurE">
    <location>
        <begin position="1"/>
        <end position="254"/>
    </location>
</feature>
<feature type="binding site" evidence="1">
    <location>
        <position position="9"/>
    </location>
    <ligand>
        <name>a divalent metal cation</name>
        <dbReference type="ChEBI" id="CHEBI:60240"/>
    </ligand>
</feature>
<feature type="binding site" evidence="1">
    <location>
        <position position="10"/>
    </location>
    <ligand>
        <name>a divalent metal cation</name>
        <dbReference type="ChEBI" id="CHEBI:60240"/>
    </ligand>
</feature>
<feature type="binding site" evidence="1">
    <location>
        <position position="40"/>
    </location>
    <ligand>
        <name>a divalent metal cation</name>
        <dbReference type="ChEBI" id="CHEBI:60240"/>
    </ligand>
</feature>
<feature type="binding site" evidence="1">
    <location>
        <position position="93"/>
    </location>
    <ligand>
        <name>a divalent metal cation</name>
        <dbReference type="ChEBI" id="CHEBI:60240"/>
    </ligand>
</feature>
<reference key="1">
    <citation type="journal article" date="2006" name="J. Bacteriol.">
        <title>Complete genome sequence of Yersinia pestis strains Antiqua and Nepal516: evidence of gene reduction in an emerging pathogen.</title>
        <authorList>
            <person name="Chain P.S.G."/>
            <person name="Hu P."/>
            <person name="Malfatti S.A."/>
            <person name="Radnedge L."/>
            <person name="Larimer F."/>
            <person name="Vergez L.M."/>
            <person name="Worsham P."/>
            <person name="Chu M.C."/>
            <person name="Andersen G.L."/>
        </authorList>
    </citation>
    <scope>NUCLEOTIDE SEQUENCE [LARGE SCALE GENOMIC DNA]</scope>
    <source>
        <strain>Nepal516</strain>
    </source>
</reference>
<reference key="2">
    <citation type="submission" date="2009-04" db="EMBL/GenBank/DDBJ databases">
        <title>Yersinia pestis Nepal516A whole genome shotgun sequencing project.</title>
        <authorList>
            <person name="Plunkett G. III"/>
            <person name="Anderson B.D."/>
            <person name="Baumler D.J."/>
            <person name="Burland V."/>
            <person name="Cabot E.L."/>
            <person name="Glasner J.D."/>
            <person name="Mau B."/>
            <person name="Neeno-Eckwall E."/>
            <person name="Perna N.T."/>
            <person name="Munk A.C."/>
            <person name="Tapia R."/>
            <person name="Green L.D."/>
            <person name="Rogers Y.C."/>
            <person name="Detter J.C."/>
            <person name="Bruce D.C."/>
            <person name="Brettin T.S."/>
        </authorList>
    </citation>
    <scope>NUCLEOTIDE SEQUENCE [LARGE SCALE GENOMIC DNA]</scope>
    <source>
        <strain>Nepal516</strain>
    </source>
</reference>
<proteinExistence type="inferred from homology"/>
<name>SURE_YERPN</name>
<dbReference type="EC" id="3.1.3.5" evidence="1"/>
<dbReference type="EC" id="3.1.3.6" evidence="1"/>
<dbReference type="EC" id="3.6.1.11" evidence="1"/>
<dbReference type="EMBL" id="CP000305">
    <property type="protein sequence ID" value="ABG17067.1"/>
    <property type="molecule type" value="Genomic_DNA"/>
</dbReference>
<dbReference type="EMBL" id="ACNQ01000007">
    <property type="protein sequence ID" value="EEO77931.1"/>
    <property type="molecule type" value="Genomic_DNA"/>
</dbReference>
<dbReference type="RefSeq" id="WP_002209394.1">
    <property type="nucleotide sequence ID" value="NZ_ACNQ01000007.1"/>
</dbReference>
<dbReference type="SMR" id="Q1CLR3"/>
<dbReference type="GeneID" id="57975351"/>
<dbReference type="KEGG" id="ypn:YPN_0735"/>
<dbReference type="HOGENOM" id="CLU_045192_1_2_6"/>
<dbReference type="Proteomes" id="UP000008936">
    <property type="component" value="Chromosome"/>
</dbReference>
<dbReference type="GO" id="GO:0005737">
    <property type="term" value="C:cytoplasm"/>
    <property type="evidence" value="ECO:0007669"/>
    <property type="project" value="UniProtKB-SubCell"/>
</dbReference>
<dbReference type="GO" id="GO:0008254">
    <property type="term" value="F:3'-nucleotidase activity"/>
    <property type="evidence" value="ECO:0007669"/>
    <property type="project" value="UniProtKB-UniRule"/>
</dbReference>
<dbReference type="GO" id="GO:0008253">
    <property type="term" value="F:5'-nucleotidase activity"/>
    <property type="evidence" value="ECO:0007669"/>
    <property type="project" value="UniProtKB-UniRule"/>
</dbReference>
<dbReference type="GO" id="GO:0004309">
    <property type="term" value="F:exopolyphosphatase activity"/>
    <property type="evidence" value="ECO:0007669"/>
    <property type="project" value="UniProtKB-UniRule"/>
</dbReference>
<dbReference type="GO" id="GO:0046872">
    <property type="term" value="F:metal ion binding"/>
    <property type="evidence" value="ECO:0007669"/>
    <property type="project" value="UniProtKB-UniRule"/>
</dbReference>
<dbReference type="GO" id="GO:0000166">
    <property type="term" value="F:nucleotide binding"/>
    <property type="evidence" value="ECO:0007669"/>
    <property type="project" value="UniProtKB-KW"/>
</dbReference>
<dbReference type="FunFam" id="3.40.1210.10:FF:000001">
    <property type="entry name" value="5'/3'-nucleotidase SurE"/>
    <property type="match status" value="1"/>
</dbReference>
<dbReference type="Gene3D" id="3.40.1210.10">
    <property type="entry name" value="Survival protein SurE-like phosphatase/nucleotidase"/>
    <property type="match status" value="1"/>
</dbReference>
<dbReference type="HAMAP" id="MF_00060">
    <property type="entry name" value="SurE"/>
    <property type="match status" value="1"/>
</dbReference>
<dbReference type="InterPro" id="IPR030048">
    <property type="entry name" value="SurE"/>
</dbReference>
<dbReference type="InterPro" id="IPR002828">
    <property type="entry name" value="SurE-like_Pase/nucleotidase"/>
</dbReference>
<dbReference type="InterPro" id="IPR036523">
    <property type="entry name" value="SurE-like_sf"/>
</dbReference>
<dbReference type="NCBIfam" id="NF001488">
    <property type="entry name" value="PRK00346.1-1"/>
    <property type="match status" value="1"/>
</dbReference>
<dbReference type="NCBIfam" id="NF001489">
    <property type="entry name" value="PRK00346.1-3"/>
    <property type="match status" value="1"/>
</dbReference>
<dbReference type="NCBIfam" id="NF001490">
    <property type="entry name" value="PRK00346.1-4"/>
    <property type="match status" value="1"/>
</dbReference>
<dbReference type="NCBIfam" id="TIGR00087">
    <property type="entry name" value="surE"/>
    <property type="match status" value="1"/>
</dbReference>
<dbReference type="PANTHER" id="PTHR30457">
    <property type="entry name" value="5'-NUCLEOTIDASE SURE"/>
    <property type="match status" value="1"/>
</dbReference>
<dbReference type="PANTHER" id="PTHR30457:SF12">
    <property type="entry name" value="5'_3'-NUCLEOTIDASE SURE"/>
    <property type="match status" value="1"/>
</dbReference>
<dbReference type="Pfam" id="PF01975">
    <property type="entry name" value="SurE"/>
    <property type="match status" value="1"/>
</dbReference>
<dbReference type="SUPFAM" id="SSF64167">
    <property type="entry name" value="SurE-like"/>
    <property type="match status" value="1"/>
</dbReference>
<evidence type="ECO:0000255" key="1">
    <source>
        <dbReference type="HAMAP-Rule" id="MF_00060"/>
    </source>
</evidence>
<organism>
    <name type="scientific">Yersinia pestis bv. Antiqua (strain Nepal516)</name>
    <dbReference type="NCBI Taxonomy" id="377628"/>
    <lineage>
        <taxon>Bacteria</taxon>
        <taxon>Pseudomonadati</taxon>
        <taxon>Pseudomonadota</taxon>
        <taxon>Gammaproteobacteria</taxon>
        <taxon>Enterobacterales</taxon>
        <taxon>Yersiniaceae</taxon>
        <taxon>Yersinia</taxon>
    </lineage>
</organism>
<comment type="function">
    <text evidence="1">Nucleotidase with a broad substrate specificity as it can dephosphorylate various ribo- and deoxyribonucleoside 5'-monophosphates and ribonucleoside 3'-monophosphates with highest affinity to 3'-AMP. Also hydrolyzes polyphosphate (exopolyphosphatase activity) with the preference for short-chain-length substrates (P20-25). Might be involved in the regulation of dNTP and NTP pools, and in the turnover of 3'-mononucleotides produced by numerous intracellular RNases (T1, T2, and F) during the degradation of various RNAs.</text>
</comment>
<comment type="catalytic activity">
    <reaction evidence="1">
        <text>a ribonucleoside 5'-phosphate + H2O = a ribonucleoside + phosphate</text>
        <dbReference type="Rhea" id="RHEA:12484"/>
        <dbReference type="ChEBI" id="CHEBI:15377"/>
        <dbReference type="ChEBI" id="CHEBI:18254"/>
        <dbReference type="ChEBI" id="CHEBI:43474"/>
        <dbReference type="ChEBI" id="CHEBI:58043"/>
        <dbReference type="EC" id="3.1.3.5"/>
    </reaction>
</comment>
<comment type="catalytic activity">
    <reaction evidence="1">
        <text>a ribonucleoside 3'-phosphate + H2O = a ribonucleoside + phosphate</text>
        <dbReference type="Rhea" id="RHEA:10144"/>
        <dbReference type="ChEBI" id="CHEBI:13197"/>
        <dbReference type="ChEBI" id="CHEBI:15377"/>
        <dbReference type="ChEBI" id="CHEBI:18254"/>
        <dbReference type="ChEBI" id="CHEBI:43474"/>
        <dbReference type="EC" id="3.1.3.6"/>
    </reaction>
</comment>
<comment type="catalytic activity">
    <reaction evidence="1">
        <text>[phosphate](n) + H2O = [phosphate](n-1) + phosphate + H(+)</text>
        <dbReference type="Rhea" id="RHEA:21528"/>
        <dbReference type="Rhea" id="RHEA-COMP:9859"/>
        <dbReference type="Rhea" id="RHEA-COMP:14279"/>
        <dbReference type="ChEBI" id="CHEBI:15377"/>
        <dbReference type="ChEBI" id="CHEBI:15378"/>
        <dbReference type="ChEBI" id="CHEBI:16838"/>
        <dbReference type="ChEBI" id="CHEBI:43474"/>
        <dbReference type="EC" id="3.6.1.11"/>
    </reaction>
</comment>
<comment type="cofactor">
    <cofactor evidence="1">
        <name>a divalent metal cation</name>
        <dbReference type="ChEBI" id="CHEBI:60240"/>
    </cofactor>
    <text evidence="1">Binds 1 divalent metal cation per subunit.</text>
</comment>
<comment type="subcellular location">
    <subcellularLocation>
        <location evidence="1">Cytoplasm</location>
    </subcellularLocation>
</comment>
<comment type="similarity">
    <text evidence="1">Belongs to the SurE nucleotidase family.</text>
</comment>
<accession>Q1CLR3</accession>
<accession>C4GPS5</accession>